<proteinExistence type="inferred from homology"/>
<feature type="chain" id="PRO_0000111996" description="ATP-dependent 6-phosphofructokinase">
    <location>
        <begin position="1"/>
        <end position="339"/>
    </location>
</feature>
<feature type="active site" description="Proton acceptor" evidence="1">
    <location>
        <position position="127"/>
    </location>
</feature>
<feature type="binding site" evidence="1">
    <location>
        <position position="11"/>
    </location>
    <ligand>
        <name>ATP</name>
        <dbReference type="ChEBI" id="CHEBI:30616"/>
    </ligand>
</feature>
<feature type="binding site" evidence="1">
    <location>
        <begin position="72"/>
        <end position="73"/>
    </location>
    <ligand>
        <name>ATP</name>
        <dbReference type="ChEBI" id="CHEBI:30616"/>
    </ligand>
</feature>
<feature type="binding site" evidence="1">
    <location>
        <begin position="102"/>
        <end position="105"/>
    </location>
    <ligand>
        <name>ATP</name>
        <dbReference type="ChEBI" id="CHEBI:30616"/>
    </ligand>
</feature>
<feature type="binding site" evidence="1">
    <location>
        <position position="103"/>
    </location>
    <ligand>
        <name>Mg(2+)</name>
        <dbReference type="ChEBI" id="CHEBI:18420"/>
        <note>catalytic</note>
    </ligand>
</feature>
<feature type="binding site" description="in other chain" evidence="1">
    <location>
        <begin position="125"/>
        <end position="127"/>
    </location>
    <ligand>
        <name>substrate</name>
        <note>ligand shared between dimeric partners</note>
    </ligand>
</feature>
<feature type="binding site" evidence="1">
    <location>
        <position position="162"/>
    </location>
    <ligand>
        <name>substrate</name>
        <note>ligand shared between dimeric partners</note>
    </ligand>
</feature>
<feature type="binding site" description="in other chain" evidence="1">
    <location>
        <begin position="169"/>
        <end position="171"/>
    </location>
    <ligand>
        <name>substrate</name>
        <note>ligand shared between dimeric partners</note>
    </ligand>
</feature>
<feature type="binding site" evidence="1">
    <location>
        <begin position="185"/>
        <end position="187"/>
    </location>
    <ligand>
        <name>ADP</name>
        <dbReference type="ChEBI" id="CHEBI:456216"/>
        <note>allosteric activator</note>
    </ligand>
</feature>
<feature type="binding site" evidence="1">
    <location>
        <begin position="214"/>
        <end position="216"/>
    </location>
    <ligand>
        <name>ADP</name>
        <dbReference type="ChEBI" id="CHEBI:456216"/>
        <note>allosteric activator</note>
    </ligand>
</feature>
<feature type="binding site" description="in other chain" evidence="1">
    <location>
        <position position="223"/>
    </location>
    <ligand>
        <name>substrate</name>
        <note>ligand shared between dimeric partners</note>
    </ligand>
</feature>
<feature type="binding site" evidence="1">
    <location>
        <position position="245"/>
    </location>
    <ligand>
        <name>substrate</name>
        <note>ligand shared between dimeric partners</note>
    </ligand>
</feature>
<feature type="binding site" description="in other chain" evidence="1">
    <location>
        <begin position="251"/>
        <end position="254"/>
    </location>
    <ligand>
        <name>substrate</name>
        <note>ligand shared between dimeric partners</note>
    </ligand>
</feature>
<reference key="1">
    <citation type="submission" date="1999-07" db="EMBL/GenBank/DDBJ databases">
        <title>Identification of a phosphofructokinase-encoding gene from Streptococcus thermophilus CNRZ1205-3: a novel link between carbon metabolism and gene regulation?</title>
        <authorList>
            <person name="Crispie F."/>
            <person name="Anba J."/>
            <person name="Renault P."/>
            <person name="Ehrlich S.D."/>
            <person name="Fitzgerald G.F."/>
            <person name="van Sinderen D."/>
        </authorList>
    </citation>
    <scope>NUCLEOTIDE SEQUENCE [GENOMIC DNA]</scope>
    <source>
        <strain>CNRZ 1205-3</strain>
    </source>
</reference>
<gene>
    <name evidence="1" type="primary">pfkA</name>
    <name type="synonym">pfk</name>
</gene>
<organism>
    <name type="scientific">Streptococcus thermophilus</name>
    <dbReference type="NCBI Taxonomy" id="1308"/>
    <lineage>
        <taxon>Bacteria</taxon>
        <taxon>Bacillati</taxon>
        <taxon>Bacillota</taxon>
        <taxon>Bacilli</taxon>
        <taxon>Lactobacillales</taxon>
        <taxon>Streptococcaceae</taxon>
        <taxon>Streptococcus</taxon>
    </lineage>
</organism>
<comment type="function">
    <text evidence="1">Catalyzes the phosphorylation of D-fructose 6-phosphate to fructose 1,6-bisphosphate by ATP, the first committing step of glycolysis.</text>
</comment>
<comment type="catalytic activity">
    <reaction evidence="1">
        <text>beta-D-fructose 6-phosphate + ATP = beta-D-fructose 1,6-bisphosphate + ADP + H(+)</text>
        <dbReference type="Rhea" id="RHEA:16109"/>
        <dbReference type="ChEBI" id="CHEBI:15378"/>
        <dbReference type="ChEBI" id="CHEBI:30616"/>
        <dbReference type="ChEBI" id="CHEBI:32966"/>
        <dbReference type="ChEBI" id="CHEBI:57634"/>
        <dbReference type="ChEBI" id="CHEBI:456216"/>
        <dbReference type="EC" id="2.7.1.11"/>
    </reaction>
</comment>
<comment type="cofactor">
    <cofactor evidence="1">
        <name>Mg(2+)</name>
        <dbReference type="ChEBI" id="CHEBI:18420"/>
    </cofactor>
</comment>
<comment type="activity regulation">
    <text evidence="1">Allosterically activated by ADP and other diphosphonucleosides, and allosterically inhibited by phosphoenolpyruvate.</text>
</comment>
<comment type="pathway">
    <text evidence="1">Carbohydrate degradation; glycolysis; D-glyceraldehyde 3-phosphate and glycerone phosphate from D-glucose: step 3/4.</text>
</comment>
<comment type="subunit">
    <text evidence="1">Homotetramer.</text>
</comment>
<comment type="subcellular location">
    <subcellularLocation>
        <location evidence="1">Cytoplasm</location>
    </subcellularLocation>
</comment>
<comment type="similarity">
    <text evidence="1">Belongs to the phosphofructokinase type A (PFKA) family. ATP-dependent PFK group I subfamily. Prokaryotic clade 'B1' sub-subfamily.</text>
</comment>
<protein>
    <recommendedName>
        <fullName evidence="1">ATP-dependent 6-phosphofructokinase</fullName>
        <shortName evidence="1">ATP-PFK</shortName>
        <shortName evidence="1">Phosphofructokinase</shortName>
        <ecNumber evidence="1">2.7.1.11</ecNumber>
    </recommendedName>
    <alternativeName>
        <fullName evidence="1">Phosphohexokinase</fullName>
    </alternativeName>
</protein>
<accession>Q9L9E3</accession>
<dbReference type="EC" id="2.7.1.11" evidence="1"/>
<dbReference type="EMBL" id="AF172173">
    <property type="protein sequence ID" value="AAF25803.1"/>
    <property type="molecule type" value="Genomic_DNA"/>
</dbReference>
<dbReference type="RefSeq" id="WP_011681243.1">
    <property type="nucleotide sequence ID" value="NZ_WMLD01000003.1"/>
</dbReference>
<dbReference type="SMR" id="Q9L9E3"/>
<dbReference type="GeneID" id="66898990"/>
<dbReference type="eggNOG" id="COG0205">
    <property type="taxonomic scope" value="Bacteria"/>
</dbReference>
<dbReference type="OrthoDB" id="9802503at2"/>
<dbReference type="SABIO-RK" id="Q9L9E3"/>
<dbReference type="UniPathway" id="UPA00109">
    <property type="reaction ID" value="UER00182"/>
</dbReference>
<dbReference type="GO" id="GO:0005945">
    <property type="term" value="C:6-phosphofructokinase complex"/>
    <property type="evidence" value="ECO:0007669"/>
    <property type="project" value="TreeGrafter"/>
</dbReference>
<dbReference type="GO" id="GO:0003872">
    <property type="term" value="F:6-phosphofructokinase activity"/>
    <property type="evidence" value="ECO:0007669"/>
    <property type="project" value="UniProtKB-UniRule"/>
</dbReference>
<dbReference type="GO" id="GO:0016208">
    <property type="term" value="F:AMP binding"/>
    <property type="evidence" value="ECO:0007669"/>
    <property type="project" value="TreeGrafter"/>
</dbReference>
<dbReference type="GO" id="GO:0005524">
    <property type="term" value="F:ATP binding"/>
    <property type="evidence" value="ECO:0007669"/>
    <property type="project" value="UniProtKB-KW"/>
</dbReference>
<dbReference type="GO" id="GO:0070095">
    <property type="term" value="F:fructose-6-phosphate binding"/>
    <property type="evidence" value="ECO:0007669"/>
    <property type="project" value="TreeGrafter"/>
</dbReference>
<dbReference type="GO" id="GO:0042802">
    <property type="term" value="F:identical protein binding"/>
    <property type="evidence" value="ECO:0007669"/>
    <property type="project" value="TreeGrafter"/>
</dbReference>
<dbReference type="GO" id="GO:0046872">
    <property type="term" value="F:metal ion binding"/>
    <property type="evidence" value="ECO:0007669"/>
    <property type="project" value="UniProtKB-KW"/>
</dbReference>
<dbReference type="GO" id="GO:0048029">
    <property type="term" value="F:monosaccharide binding"/>
    <property type="evidence" value="ECO:0007669"/>
    <property type="project" value="TreeGrafter"/>
</dbReference>
<dbReference type="GO" id="GO:0061621">
    <property type="term" value="P:canonical glycolysis"/>
    <property type="evidence" value="ECO:0007669"/>
    <property type="project" value="TreeGrafter"/>
</dbReference>
<dbReference type="GO" id="GO:0030388">
    <property type="term" value="P:fructose 1,6-bisphosphate metabolic process"/>
    <property type="evidence" value="ECO:0007669"/>
    <property type="project" value="TreeGrafter"/>
</dbReference>
<dbReference type="GO" id="GO:0006002">
    <property type="term" value="P:fructose 6-phosphate metabolic process"/>
    <property type="evidence" value="ECO:0007669"/>
    <property type="project" value="InterPro"/>
</dbReference>
<dbReference type="FunFam" id="3.40.50.450:FF:000001">
    <property type="entry name" value="ATP-dependent 6-phosphofructokinase"/>
    <property type="match status" value="1"/>
</dbReference>
<dbReference type="FunFam" id="3.40.50.460:FF:000002">
    <property type="entry name" value="ATP-dependent 6-phosphofructokinase"/>
    <property type="match status" value="1"/>
</dbReference>
<dbReference type="Gene3D" id="3.40.50.450">
    <property type="match status" value="1"/>
</dbReference>
<dbReference type="Gene3D" id="3.40.50.460">
    <property type="entry name" value="Phosphofructokinase domain"/>
    <property type="match status" value="1"/>
</dbReference>
<dbReference type="HAMAP" id="MF_00339">
    <property type="entry name" value="Phosphofructokinase_I_B1"/>
    <property type="match status" value="1"/>
</dbReference>
<dbReference type="InterPro" id="IPR022953">
    <property type="entry name" value="ATP_PFK"/>
</dbReference>
<dbReference type="InterPro" id="IPR012003">
    <property type="entry name" value="ATP_PFK_prok-type"/>
</dbReference>
<dbReference type="InterPro" id="IPR012828">
    <property type="entry name" value="PFKA_ATP_prok"/>
</dbReference>
<dbReference type="InterPro" id="IPR000023">
    <property type="entry name" value="Phosphofructokinase_dom"/>
</dbReference>
<dbReference type="InterPro" id="IPR035966">
    <property type="entry name" value="PKF_sf"/>
</dbReference>
<dbReference type="NCBIfam" id="TIGR02482">
    <property type="entry name" value="PFKA_ATP"/>
    <property type="match status" value="1"/>
</dbReference>
<dbReference type="NCBIfam" id="NF002872">
    <property type="entry name" value="PRK03202.1"/>
    <property type="match status" value="1"/>
</dbReference>
<dbReference type="PANTHER" id="PTHR13697:SF4">
    <property type="entry name" value="ATP-DEPENDENT 6-PHOSPHOFRUCTOKINASE"/>
    <property type="match status" value="1"/>
</dbReference>
<dbReference type="PANTHER" id="PTHR13697">
    <property type="entry name" value="PHOSPHOFRUCTOKINASE"/>
    <property type="match status" value="1"/>
</dbReference>
<dbReference type="Pfam" id="PF00365">
    <property type="entry name" value="PFK"/>
    <property type="match status" value="1"/>
</dbReference>
<dbReference type="PIRSF" id="PIRSF000532">
    <property type="entry name" value="ATP_PFK_prok"/>
    <property type="match status" value="1"/>
</dbReference>
<dbReference type="PRINTS" id="PR00476">
    <property type="entry name" value="PHFRCTKINASE"/>
</dbReference>
<dbReference type="SUPFAM" id="SSF53784">
    <property type="entry name" value="Phosphofructokinase"/>
    <property type="match status" value="1"/>
</dbReference>
<name>PFKA_STRTR</name>
<evidence type="ECO:0000255" key="1">
    <source>
        <dbReference type="HAMAP-Rule" id="MF_00339"/>
    </source>
</evidence>
<sequence>MKRIAVLTSGGDAPGMNAAVRAVVLKAISEGIEVFGINRGYAGMVEGDIFKLDAKRVENILSRGGTFLQSARYPEFAQLEGQLKGIEQLKKYGIEGVVVIGGDGSYHGAMRLTEHGFPAVGLPGTIDNDIVGTDYTIGFDTAVATATEALDKIQDTAFSHGRTFVVEVMGRNAGDIALWAGIASGADQIIVPEEEYDINEVVRKVKEGYESGEKSHHIIVLAEGVMGAEEFAAKMKEAGDTSDLRATNLGHVIRGGSPTARDRVLASWMGAHAVDLLKEGIGGVAVGIHNEQLVESPILGTAEEGALFSLTEDGKIIVNNPHKARLDFAELNRSLANLK</sequence>
<keyword id="KW-0021">Allosteric enzyme</keyword>
<keyword id="KW-0067">ATP-binding</keyword>
<keyword id="KW-0963">Cytoplasm</keyword>
<keyword id="KW-0324">Glycolysis</keyword>
<keyword id="KW-0418">Kinase</keyword>
<keyword id="KW-0460">Magnesium</keyword>
<keyword id="KW-0479">Metal-binding</keyword>
<keyword id="KW-0547">Nucleotide-binding</keyword>
<keyword id="KW-0808">Transferase</keyword>